<reference key="1">
    <citation type="journal article" date="2007" name="J. Bacteriol.">
        <title>The complete genome sequence of Roseobacter denitrificans reveals a mixotrophic rather than photosynthetic metabolism.</title>
        <authorList>
            <person name="Swingley W.D."/>
            <person name="Sadekar S."/>
            <person name="Mastrian S.D."/>
            <person name="Matthies H.J."/>
            <person name="Hao J."/>
            <person name="Ramos H."/>
            <person name="Acharya C.R."/>
            <person name="Conrad A.L."/>
            <person name="Taylor H.L."/>
            <person name="Dejesa L.C."/>
            <person name="Shah M.K."/>
            <person name="O'Huallachain M.E."/>
            <person name="Lince M.T."/>
            <person name="Blankenship R.E."/>
            <person name="Beatty J.T."/>
            <person name="Touchman J.W."/>
        </authorList>
    </citation>
    <scope>NUCLEOTIDE SEQUENCE [LARGE SCALE GENOMIC DNA]</scope>
    <source>
        <strain>ATCC 33942 / OCh 114</strain>
    </source>
</reference>
<comment type="similarity">
    <text evidence="1">Belongs to the UPF0102 family.</text>
</comment>
<accession>Q16B02</accession>
<name>Y1191_ROSDO</name>
<feature type="chain" id="PRO_0000336254" description="UPF0102 protein RD1_1191">
    <location>
        <begin position="1"/>
        <end position="129"/>
    </location>
</feature>
<gene>
    <name type="ordered locus">RD1_1191</name>
</gene>
<dbReference type="EMBL" id="CP000362">
    <property type="protein sequence ID" value="ABG30841.1"/>
    <property type="molecule type" value="Genomic_DNA"/>
</dbReference>
<dbReference type="RefSeq" id="WP_011567461.1">
    <property type="nucleotide sequence ID" value="NC_008209.1"/>
</dbReference>
<dbReference type="SMR" id="Q16B02"/>
<dbReference type="STRING" id="375451.RD1_1191"/>
<dbReference type="KEGG" id="rde:RD1_1191"/>
<dbReference type="eggNOG" id="COG0792">
    <property type="taxonomic scope" value="Bacteria"/>
</dbReference>
<dbReference type="HOGENOM" id="CLU_115353_0_1_5"/>
<dbReference type="OrthoDB" id="9812968at2"/>
<dbReference type="Proteomes" id="UP000007029">
    <property type="component" value="Chromosome"/>
</dbReference>
<dbReference type="GO" id="GO:0003676">
    <property type="term" value="F:nucleic acid binding"/>
    <property type="evidence" value="ECO:0007669"/>
    <property type="project" value="InterPro"/>
</dbReference>
<dbReference type="Gene3D" id="3.40.1350.10">
    <property type="match status" value="1"/>
</dbReference>
<dbReference type="HAMAP" id="MF_00048">
    <property type="entry name" value="UPF0102"/>
    <property type="match status" value="1"/>
</dbReference>
<dbReference type="InterPro" id="IPR011335">
    <property type="entry name" value="Restrct_endonuc-II-like"/>
</dbReference>
<dbReference type="InterPro" id="IPR011856">
    <property type="entry name" value="tRNA_endonuc-like_dom_sf"/>
</dbReference>
<dbReference type="InterPro" id="IPR003509">
    <property type="entry name" value="UPF0102_YraN-like"/>
</dbReference>
<dbReference type="PANTHER" id="PTHR34039">
    <property type="entry name" value="UPF0102 PROTEIN YRAN"/>
    <property type="match status" value="1"/>
</dbReference>
<dbReference type="PANTHER" id="PTHR34039:SF1">
    <property type="entry name" value="UPF0102 PROTEIN YRAN"/>
    <property type="match status" value="1"/>
</dbReference>
<dbReference type="Pfam" id="PF02021">
    <property type="entry name" value="UPF0102"/>
    <property type="match status" value="1"/>
</dbReference>
<dbReference type="SUPFAM" id="SSF52980">
    <property type="entry name" value="Restriction endonuclease-like"/>
    <property type="match status" value="1"/>
</dbReference>
<evidence type="ECO:0000255" key="1">
    <source>
        <dbReference type="HAMAP-Rule" id="MF_00048"/>
    </source>
</evidence>
<proteinExistence type="inferred from homology"/>
<organism>
    <name type="scientific">Roseobacter denitrificans (strain ATCC 33942 / OCh 114)</name>
    <name type="common">Erythrobacter sp. (strain OCh 114)</name>
    <name type="synonym">Roseobacter denitrificans</name>
    <dbReference type="NCBI Taxonomy" id="375451"/>
    <lineage>
        <taxon>Bacteria</taxon>
        <taxon>Pseudomonadati</taxon>
        <taxon>Pseudomonadota</taxon>
        <taxon>Alphaproteobacteria</taxon>
        <taxon>Rhodobacterales</taxon>
        <taxon>Roseobacteraceae</taxon>
        <taxon>Roseobacter</taxon>
    </lineage>
</organism>
<keyword id="KW-1185">Reference proteome</keyword>
<protein>
    <recommendedName>
        <fullName evidence="1">UPF0102 protein RD1_1191</fullName>
    </recommendedName>
</protein>
<sequence>MTQMPQTNARVHAGRMAYHAGLSAEASVIREYESHGYVFEAQRWRGQVGEIDLVLRKSGLVVFVEVKKSKSFERAALRISPTQKRRIFATGEEFVAQEPQGLLTDMRFDVALVDAAGAVQILENALSEG</sequence>